<sequence length="119" mass="13500">MSDLIMKIEAQQKAENPPVFRVGDTVKVHFKIVEGKTERIQVYEGLVICFKNSGIGRTFTVRKNSYGVGVERVFPLHSPRIAKVEVVRPGKVRRAKLYYIRDKVGKAAKIKTLITKKNS</sequence>
<comment type="function">
    <text evidence="1">This protein is located at the 30S-50S ribosomal subunit interface and may play a role in the structure and function of the aminoacyl-tRNA binding site.</text>
</comment>
<comment type="similarity">
    <text evidence="1">Belongs to the bacterial ribosomal protein bL19 family.</text>
</comment>
<reference key="1">
    <citation type="journal article" date="2004" name="Proc. Natl. Acad. Sci. U.S.A.">
        <title>Comparison of the genome of the oral pathogen Treponema denticola with other spirochete genomes.</title>
        <authorList>
            <person name="Seshadri R."/>
            <person name="Myers G.S.A."/>
            <person name="Tettelin H."/>
            <person name="Eisen J.A."/>
            <person name="Heidelberg J.F."/>
            <person name="Dodson R.J."/>
            <person name="Davidsen T.M."/>
            <person name="DeBoy R.T."/>
            <person name="Fouts D.E."/>
            <person name="Haft D.H."/>
            <person name="Selengut J."/>
            <person name="Ren Q."/>
            <person name="Brinkac L.M."/>
            <person name="Madupu R."/>
            <person name="Kolonay J.F."/>
            <person name="Durkin S.A."/>
            <person name="Daugherty S.C."/>
            <person name="Shetty J."/>
            <person name="Shvartsbeyn A."/>
            <person name="Gebregeorgis E."/>
            <person name="Geer K."/>
            <person name="Tsegaye G."/>
            <person name="Malek J.A."/>
            <person name="Ayodeji B."/>
            <person name="Shatsman S."/>
            <person name="McLeod M.P."/>
            <person name="Smajs D."/>
            <person name="Howell J.K."/>
            <person name="Pal S."/>
            <person name="Amin A."/>
            <person name="Vashisth P."/>
            <person name="McNeill T.Z."/>
            <person name="Xiang Q."/>
            <person name="Sodergren E."/>
            <person name="Baca E."/>
            <person name="Weinstock G.M."/>
            <person name="Norris S.J."/>
            <person name="Fraser C.M."/>
            <person name="Paulsen I.T."/>
        </authorList>
    </citation>
    <scope>NUCLEOTIDE SEQUENCE [LARGE SCALE GENOMIC DNA]</scope>
    <source>
        <strain>ATCC 35405 / DSM 14222 / CIP 103919 / JCM 8153 / KCTC 15104</strain>
    </source>
</reference>
<evidence type="ECO:0000255" key="1">
    <source>
        <dbReference type="HAMAP-Rule" id="MF_00402"/>
    </source>
</evidence>
<evidence type="ECO:0000305" key="2"/>
<gene>
    <name evidence="1" type="primary">rplS</name>
    <name type="ordered locus">TDE_0885</name>
</gene>
<proteinExistence type="inferred from homology"/>
<feature type="chain" id="PRO_0000163560" description="Large ribosomal subunit protein bL19">
    <location>
        <begin position="1"/>
        <end position="119"/>
    </location>
</feature>
<protein>
    <recommendedName>
        <fullName evidence="1">Large ribosomal subunit protein bL19</fullName>
    </recommendedName>
    <alternativeName>
        <fullName evidence="2">50S ribosomal protein L19</fullName>
    </alternativeName>
</protein>
<accession>Q73PB4</accession>
<organism>
    <name type="scientific">Treponema denticola (strain ATCC 35405 / DSM 14222 / CIP 103919 / JCM 8153 / KCTC 15104)</name>
    <dbReference type="NCBI Taxonomy" id="243275"/>
    <lineage>
        <taxon>Bacteria</taxon>
        <taxon>Pseudomonadati</taxon>
        <taxon>Spirochaetota</taxon>
        <taxon>Spirochaetia</taxon>
        <taxon>Spirochaetales</taxon>
        <taxon>Treponemataceae</taxon>
        <taxon>Treponema</taxon>
    </lineage>
</organism>
<keyword id="KW-1185">Reference proteome</keyword>
<keyword id="KW-0687">Ribonucleoprotein</keyword>
<keyword id="KW-0689">Ribosomal protein</keyword>
<dbReference type="EMBL" id="AE017226">
    <property type="protein sequence ID" value="AAS11376.1"/>
    <property type="molecule type" value="Genomic_DNA"/>
</dbReference>
<dbReference type="RefSeq" id="NP_971495.1">
    <property type="nucleotide sequence ID" value="NC_002967.9"/>
</dbReference>
<dbReference type="RefSeq" id="WP_002670222.1">
    <property type="nucleotide sequence ID" value="NC_002967.9"/>
</dbReference>
<dbReference type="SMR" id="Q73PB4"/>
<dbReference type="STRING" id="243275.TDE_0885"/>
<dbReference type="PaxDb" id="243275-TDE_0885"/>
<dbReference type="GeneID" id="2739759"/>
<dbReference type="KEGG" id="tde:TDE_0885"/>
<dbReference type="PATRIC" id="fig|243275.7.peg.855"/>
<dbReference type="eggNOG" id="COG0335">
    <property type="taxonomic scope" value="Bacteria"/>
</dbReference>
<dbReference type="HOGENOM" id="CLU_103507_2_2_12"/>
<dbReference type="OrthoDB" id="9803541at2"/>
<dbReference type="Proteomes" id="UP000008212">
    <property type="component" value="Chromosome"/>
</dbReference>
<dbReference type="GO" id="GO:0022625">
    <property type="term" value="C:cytosolic large ribosomal subunit"/>
    <property type="evidence" value="ECO:0007669"/>
    <property type="project" value="TreeGrafter"/>
</dbReference>
<dbReference type="GO" id="GO:0003735">
    <property type="term" value="F:structural constituent of ribosome"/>
    <property type="evidence" value="ECO:0007669"/>
    <property type="project" value="InterPro"/>
</dbReference>
<dbReference type="GO" id="GO:0006412">
    <property type="term" value="P:translation"/>
    <property type="evidence" value="ECO:0007669"/>
    <property type="project" value="UniProtKB-UniRule"/>
</dbReference>
<dbReference type="FunFam" id="2.30.30.790:FF:000001">
    <property type="entry name" value="50S ribosomal protein L19"/>
    <property type="match status" value="1"/>
</dbReference>
<dbReference type="Gene3D" id="2.30.30.790">
    <property type="match status" value="1"/>
</dbReference>
<dbReference type="HAMAP" id="MF_00402">
    <property type="entry name" value="Ribosomal_bL19"/>
    <property type="match status" value="1"/>
</dbReference>
<dbReference type="InterPro" id="IPR001857">
    <property type="entry name" value="Ribosomal_bL19"/>
</dbReference>
<dbReference type="InterPro" id="IPR018257">
    <property type="entry name" value="Ribosomal_bL19_CS"/>
</dbReference>
<dbReference type="InterPro" id="IPR038657">
    <property type="entry name" value="Ribosomal_bL19_sf"/>
</dbReference>
<dbReference type="InterPro" id="IPR008991">
    <property type="entry name" value="Translation_prot_SH3-like_sf"/>
</dbReference>
<dbReference type="NCBIfam" id="TIGR01024">
    <property type="entry name" value="rplS_bact"/>
    <property type="match status" value="1"/>
</dbReference>
<dbReference type="PANTHER" id="PTHR15680:SF9">
    <property type="entry name" value="LARGE RIBOSOMAL SUBUNIT PROTEIN BL19M"/>
    <property type="match status" value="1"/>
</dbReference>
<dbReference type="PANTHER" id="PTHR15680">
    <property type="entry name" value="RIBOSOMAL PROTEIN L19"/>
    <property type="match status" value="1"/>
</dbReference>
<dbReference type="Pfam" id="PF01245">
    <property type="entry name" value="Ribosomal_L19"/>
    <property type="match status" value="1"/>
</dbReference>
<dbReference type="PIRSF" id="PIRSF002191">
    <property type="entry name" value="Ribosomal_L19"/>
    <property type="match status" value="1"/>
</dbReference>
<dbReference type="PRINTS" id="PR00061">
    <property type="entry name" value="RIBOSOMALL19"/>
</dbReference>
<dbReference type="SUPFAM" id="SSF50104">
    <property type="entry name" value="Translation proteins SH3-like domain"/>
    <property type="match status" value="1"/>
</dbReference>
<dbReference type="PROSITE" id="PS01015">
    <property type="entry name" value="RIBOSOMAL_L19"/>
    <property type="match status" value="1"/>
</dbReference>
<name>RL19_TREDE</name>